<keyword id="KW-0963">Cytoplasm</keyword>
<accession>A6TCW0</accession>
<organism>
    <name type="scientific">Klebsiella pneumoniae subsp. pneumoniae (strain ATCC 700721 / MGH 78578)</name>
    <dbReference type="NCBI Taxonomy" id="272620"/>
    <lineage>
        <taxon>Bacteria</taxon>
        <taxon>Pseudomonadati</taxon>
        <taxon>Pseudomonadota</taxon>
        <taxon>Gammaproteobacteria</taxon>
        <taxon>Enterobacterales</taxon>
        <taxon>Enterobacteriaceae</taxon>
        <taxon>Klebsiella/Raoultella group</taxon>
        <taxon>Klebsiella</taxon>
        <taxon>Klebsiella pneumoniae complex</taxon>
    </lineage>
</organism>
<feature type="chain" id="PRO_1000065178" description="Regulatory protein RecX">
    <location>
        <begin position="1"/>
        <end position="166"/>
    </location>
</feature>
<gene>
    <name evidence="1" type="primary">recX</name>
    <name type="ordered locus">KPN78578_29700</name>
    <name type="ORF">KPN_03030</name>
</gene>
<comment type="function">
    <text evidence="1">Modulates RecA activity.</text>
</comment>
<comment type="subcellular location">
    <subcellularLocation>
        <location evidence="1">Cytoplasm</location>
    </subcellularLocation>
</comment>
<comment type="similarity">
    <text evidence="1">Belongs to the RecX family.</text>
</comment>
<proteinExistence type="inferred from homology"/>
<evidence type="ECO:0000255" key="1">
    <source>
        <dbReference type="HAMAP-Rule" id="MF_01114"/>
    </source>
</evidence>
<protein>
    <recommendedName>
        <fullName evidence="1">Regulatory protein RecX</fullName>
    </recommendedName>
</protein>
<name>RECX_KLEP7</name>
<reference key="1">
    <citation type="submission" date="2006-09" db="EMBL/GenBank/DDBJ databases">
        <authorList>
            <consortium name="The Klebsiella pneumonia Genome Sequencing Project"/>
            <person name="McClelland M."/>
            <person name="Sanderson E.K."/>
            <person name="Spieth J."/>
            <person name="Clifton W.S."/>
            <person name="Latreille P."/>
            <person name="Sabo A."/>
            <person name="Pepin K."/>
            <person name="Bhonagiri V."/>
            <person name="Porwollik S."/>
            <person name="Ali J."/>
            <person name="Wilson R.K."/>
        </authorList>
    </citation>
    <scope>NUCLEOTIDE SEQUENCE [LARGE SCALE GENOMIC DNA]</scope>
    <source>
        <strain>ATCC 700721 / MGH 78578</strain>
    </source>
</reference>
<sequence>MTEPSSRRSGYARLLDRAIRILAMRDHSEQELRRKLVAPVMSKNGPEALDVTPDELEQVVAWCIENRYLDDNRFVGQFIASRSRKGYGPARIRQELSQKGIARQVVDQAMRECDIDWVSLAREQAQRKYGEPLPSAFTEKVKVQRFLLYRGYLMEDIQEIWRNFAD</sequence>
<dbReference type="EMBL" id="CP000647">
    <property type="protein sequence ID" value="ABR78431.1"/>
    <property type="molecule type" value="Genomic_DNA"/>
</dbReference>
<dbReference type="RefSeq" id="WP_004213244.1">
    <property type="nucleotide sequence ID" value="NC_009648.1"/>
</dbReference>
<dbReference type="SMR" id="A6TCW0"/>
<dbReference type="STRING" id="272620.KPN_03030"/>
<dbReference type="PaxDb" id="272620-KPN_03030"/>
<dbReference type="EnsemblBacteria" id="ABR78431">
    <property type="protein sequence ID" value="ABR78431"/>
    <property type="gene ID" value="KPN_03030"/>
</dbReference>
<dbReference type="KEGG" id="kpn:KPN_03030"/>
<dbReference type="HOGENOM" id="CLU_066607_3_2_6"/>
<dbReference type="Proteomes" id="UP000000265">
    <property type="component" value="Chromosome"/>
</dbReference>
<dbReference type="GO" id="GO:0005737">
    <property type="term" value="C:cytoplasm"/>
    <property type="evidence" value="ECO:0007669"/>
    <property type="project" value="UniProtKB-SubCell"/>
</dbReference>
<dbReference type="GO" id="GO:0006282">
    <property type="term" value="P:regulation of DNA repair"/>
    <property type="evidence" value="ECO:0007669"/>
    <property type="project" value="UniProtKB-UniRule"/>
</dbReference>
<dbReference type="FunFam" id="1.10.10.10:FF:000134">
    <property type="entry name" value="Regulatory protein RecX"/>
    <property type="match status" value="1"/>
</dbReference>
<dbReference type="Gene3D" id="1.10.10.10">
    <property type="entry name" value="Winged helix-like DNA-binding domain superfamily/Winged helix DNA-binding domain"/>
    <property type="match status" value="3"/>
</dbReference>
<dbReference type="HAMAP" id="MF_01114">
    <property type="entry name" value="RecX"/>
    <property type="match status" value="1"/>
</dbReference>
<dbReference type="InterPro" id="IPR053926">
    <property type="entry name" value="RecX_HTH_1st"/>
</dbReference>
<dbReference type="InterPro" id="IPR053924">
    <property type="entry name" value="RecX_HTH_2nd"/>
</dbReference>
<dbReference type="InterPro" id="IPR053925">
    <property type="entry name" value="RecX_HTH_3rd"/>
</dbReference>
<dbReference type="InterPro" id="IPR003783">
    <property type="entry name" value="Regulatory_RecX"/>
</dbReference>
<dbReference type="InterPro" id="IPR036388">
    <property type="entry name" value="WH-like_DNA-bd_sf"/>
</dbReference>
<dbReference type="NCBIfam" id="NF001052">
    <property type="entry name" value="PRK00117.1-1"/>
    <property type="match status" value="1"/>
</dbReference>
<dbReference type="PANTHER" id="PTHR33602">
    <property type="entry name" value="REGULATORY PROTEIN RECX FAMILY PROTEIN"/>
    <property type="match status" value="1"/>
</dbReference>
<dbReference type="PANTHER" id="PTHR33602:SF1">
    <property type="entry name" value="REGULATORY PROTEIN RECX FAMILY PROTEIN"/>
    <property type="match status" value="1"/>
</dbReference>
<dbReference type="Pfam" id="PF21982">
    <property type="entry name" value="RecX_HTH1"/>
    <property type="match status" value="1"/>
</dbReference>
<dbReference type="Pfam" id="PF02631">
    <property type="entry name" value="RecX_HTH2"/>
    <property type="match status" value="1"/>
</dbReference>
<dbReference type="Pfam" id="PF21981">
    <property type="entry name" value="RecX_HTH3"/>
    <property type="match status" value="1"/>
</dbReference>